<protein>
    <recommendedName>
        <fullName>Cytochrome c oxidase assembly factor 1</fullName>
    </recommendedName>
</protein>
<sequence>MISSKSLDYTRFLPFFAALVRGHCLTVKSPTHNCGSGVKTIMDKSSIFLKNRYPISINRFVQQRKTFCGASVCLHKVLVQRQFGFEEKSHGLKYKKLFRRNIGTSEKKNRLPDLLELSSSPRRLPILFAAFCLLWGTCAVLAIQYGKQNSNVTQVVMYRVQHSKEAQDLLGSNIDFKYPFPWVPGKLHKRQGFIDINFEVSGSLASGTVHYQSQRFGPIAHWVELDCTLTSNGKTIKIPTGVSKDTQWT</sequence>
<proteinExistence type="inferred from homology"/>
<dbReference type="EMBL" id="CU329671">
    <property type="protein sequence ID" value="CAB16896.1"/>
    <property type="molecule type" value="Genomic_DNA"/>
</dbReference>
<dbReference type="PIR" id="T39578">
    <property type="entry name" value="T39578"/>
</dbReference>
<dbReference type="RefSeq" id="NP_595785.1">
    <property type="nucleotide sequence ID" value="NM_001021686.2"/>
</dbReference>
<dbReference type="SMR" id="O14320"/>
<dbReference type="BioGRID" id="276465">
    <property type="interactions" value="1"/>
</dbReference>
<dbReference type="STRING" id="284812.O14320"/>
<dbReference type="iPTMnet" id="O14320"/>
<dbReference type="PaxDb" id="4896-SPBC16E9.03c.1"/>
<dbReference type="EnsemblFungi" id="SPBC16E9.03c.1">
    <property type="protein sequence ID" value="SPBC16E9.03c.1:pep"/>
    <property type="gene ID" value="SPBC16E9.03c"/>
</dbReference>
<dbReference type="GeneID" id="2539921"/>
<dbReference type="KEGG" id="spo:2539921"/>
<dbReference type="PomBase" id="SPBC16E9.03c">
    <property type="gene designation" value="coa1"/>
</dbReference>
<dbReference type="VEuPathDB" id="FungiDB:SPBC16E9.03c"/>
<dbReference type="HOGENOM" id="CLU_1116302_0_0_1"/>
<dbReference type="InParanoid" id="O14320"/>
<dbReference type="PRO" id="PR:O14320"/>
<dbReference type="Proteomes" id="UP000002485">
    <property type="component" value="Chromosome II"/>
</dbReference>
<dbReference type="GO" id="GO:0005743">
    <property type="term" value="C:mitochondrial inner membrane"/>
    <property type="evidence" value="ECO:0000318"/>
    <property type="project" value="GO_Central"/>
</dbReference>
<dbReference type="GO" id="GO:0005739">
    <property type="term" value="C:mitochondrion"/>
    <property type="evidence" value="ECO:0007005"/>
    <property type="project" value="PomBase"/>
</dbReference>
<dbReference type="GO" id="GO:0033617">
    <property type="term" value="P:mitochondrial cytochrome c oxidase assembly"/>
    <property type="evidence" value="ECO:0000318"/>
    <property type="project" value="GO_Central"/>
</dbReference>
<dbReference type="InterPro" id="IPR014807">
    <property type="entry name" value="Coa1"/>
</dbReference>
<dbReference type="InterPro" id="IPR042432">
    <property type="entry name" value="Coa1_fungi"/>
</dbReference>
<dbReference type="PANTHER" id="PTHR28523">
    <property type="entry name" value="CYTOCHROME C OXIDASE ASSEMBLY FACTOR 1"/>
    <property type="match status" value="1"/>
</dbReference>
<dbReference type="PANTHER" id="PTHR28523:SF1">
    <property type="entry name" value="CYTOCHROME C OXIDASE ASSEMBLY FACTOR 1"/>
    <property type="match status" value="1"/>
</dbReference>
<dbReference type="Pfam" id="PF08695">
    <property type="entry name" value="Coa1"/>
    <property type="match status" value="1"/>
</dbReference>
<name>COA1_SCHPO</name>
<reference key="1">
    <citation type="journal article" date="2002" name="Nature">
        <title>The genome sequence of Schizosaccharomyces pombe.</title>
        <authorList>
            <person name="Wood V."/>
            <person name="Gwilliam R."/>
            <person name="Rajandream M.A."/>
            <person name="Lyne M.H."/>
            <person name="Lyne R."/>
            <person name="Stewart A."/>
            <person name="Sgouros J.G."/>
            <person name="Peat N."/>
            <person name="Hayles J."/>
            <person name="Baker S.G."/>
            <person name="Basham D."/>
            <person name="Bowman S."/>
            <person name="Brooks K."/>
            <person name="Brown D."/>
            <person name="Brown S."/>
            <person name="Chillingworth T."/>
            <person name="Churcher C.M."/>
            <person name="Collins M."/>
            <person name="Connor R."/>
            <person name="Cronin A."/>
            <person name="Davis P."/>
            <person name="Feltwell T."/>
            <person name="Fraser A."/>
            <person name="Gentles S."/>
            <person name="Goble A."/>
            <person name="Hamlin N."/>
            <person name="Harris D.E."/>
            <person name="Hidalgo J."/>
            <person name="Hodgson G."/>
            <person name="Holroyd S."/>
            <person name="Hornsby T."/>
            <person name="Howarth S."/>
            <person name="Huckle E.J."/>
            <person name="Hunt S."/>
            <person name="Jagels K."/>
            <person name="James K.D."/>
            <person name="Jones L."/>
            <person name="Jones M."/>
            <person name="Leather S."/>
            <person name="McDonald S."/>
            <person name="McLean J."/>
            <person name="Mooney P."/>
            <person name="Moule S."/>
            <person name="Mungall K.L."/>
            <person name="Murphy L.D."/>
            <person name="Niblett D."/>
            <person name="Odell C."/>
            <person name="Oliver K."/>
            <person name="O'Neil S."/>
            <person name="Pearson D."/>
            <person name="Quail M.A."/>
            <person name="Rabbinowitsch E."/>
            <person name="Rutherford K.M."/>
            <person name="Rutter S."/>
            <person name="Saunders D."/>
            <person name="Seeger K."/>
            <person name="Sharp S."/>
            <person name="Skelton J."/>
            <person name="Simmonds M.N."/>
            <person name="Squares R."/>
            <person name="Squares S."/>
            <person name="Stevens K."/>
            <person name="Taylor K."/>
            <person name="Taylor R.G."/>
            <person name="Tivey A."/>
            <person name="Walsh S.V."/>
            <person name="Warren T."/>
            <person name="Whitehead S."/>
            <person name="Woodward J.R."/>
            <person name="Volckaert G."/>
            <person name="Aert R."/>
            <person name="Robben J."/>
            <person name="Grymonprez B."/>
            <person name="Weltjens I."/>
            <person name="Vanstreels E."/>
            <person name="Rieger M."/>
            <person name="Schaefer M."/>
            <person name="Mueller-Auer S."/>
            <person name="Gabel C."/>
            <person name="Fuchs M."/>
            <person name="Duesterhoeft A."/>
            <person name="Fritzc C."/>
            <person name="Holzer E."/>
            <person name="Moestl D."/>
            <person name="Hilbert H."/>
            <person name="Borzym K."/>
            <person name="Langer I."/>
            <person name="Beck A."/>
            <person name="Lehrach H."/>
            <person name="Reinhardt R."/>
            <person name="Pohl T.M."/>
            <person name="Eger P."/>
            <person name="Zimmermann W."/>
            <person name="Wedler H."/>
            <person name="Wambutt R."/>
            <person name="Purnelle B."/>
            <person name="Goffeau A."/>
            <person name="Cadieu E."/>
            <person name="Dreano S."/>
            <person name="Gloux S."/>
            <person name="Lelaure V."/>
            <person name="Mottier S."/>
            <person name="Galibert F."/>
            <person name="Aves S.J."/>
            <person name="Xiang Z."/>
            <person name="Hunt C."/>
            <person name="Moore K."/>
            <person name="Hurst S.M."/>
            <person name="Lucas M."/>
            <person name="Rochet M."/>
            <person name="Gaillardin C."/>
            <person name="Tallada V.A."/>
            <person name="Garzon A."/>
            <person name="Thode G."/>
            <person name="Daga R.R."/>
            <person name="Cruzado L."/>
            <person name="Jimenez J."/>
            <person name="Sanchez M."/>
            <person name="del Rey F."/>
            <person name="Benito J."/>
            <person name="Dominguez A."/>
            <person name="Revuelta J.L."/>
            <person name="Moreno S."/>
            <person name="Armstrong J."/>
            <person name="Forsburg S.L."/>
            <person name="Cerutti L."/>
            <person name="Lowe T."/>
            <person name="McCombie W.R."/>
            <person name="Paulsen I."/>
            <person name="Potashkin J."/>
            <person name="Shpakovski G.V."/>
            <person name="Ussery D."/>
            <person name="Barrell B.G."/>
            <person name="Nurse P."/>
        </authorList>
    </citation>
    <scope>NUCLEOTIDE SEQUENCE [LARGE SCALE GENOMIC DNA]</scope>
    <source>
        <strain>972 / ATCC 24843</strain>
    </source>
</reference>
<reference key="2">
    <citation type="journal article" date="2006" name="Nat. Biotechnol.">
        <title>ORFeome cloning and global analysis of protein localization in the fission yeast Schizosaccharomyces pombe.</title>
        <authorList>
            <person name="Matsuyama A."/>
            <person name="Arai R."/>
            <person name="Yashiroda Y."/>
            <person name="Shirai A."/>
            <person name="Kamata A."/>
            <person name="Sekido S."/>
            <person name="Kobayashi Y."/>
            <person name="Hashimoto A."/>
            <person name="Hamamoto M."/>
            <person name="Hiraoka Y."/>
            <person name="Horinouchi S."/>
            <person name="Yoshida M."/>
        </authorList>
    </citation>
    <scope>SUBCELLULAR LOCATION [LARGE SCALE ANALYSIS]</scope>
</reference>
<accession>O14320</accession>
<comment type="function">
    <text evidence="1">Required for efficient assembly of cytochrome c oxidase in the mitochondrial inner membrane. Involved in a step coupling MSS51-dependent cotranslational insertion of COX1 to the addition of its heme A and copper B cofactors (By similarity).</text>
</comment>
<comment type="subcellular location">
    <subcellularLocation>
        <location evidence="1">Mitochondrion inner membrane</location>
        <topology evidence="1">Single-pass membrane protein</topology>
    </subcellularLocation>
</comment>
<comment type="similarity">
    <text evidence="3">Belongs to the COA1 family.</text>
</comment>
<feature type="chain" id="PRO_0000373998" description="Cytochrome c oxidase assembly factor 1">
    <location>
        <begin position="1"/>
        <end position="249"/>
    </location>
</feature>
<feature type="topological domain" description="Mitochondrial matrix" evidence="1">
    <location>
        <begin position="1"/>
        <end position="123"/>
    </location>
</feature>
<feature type="transmembrane region" description="Helical" evidence="2">
    <location>
        <begin position="124"/>
        <end position="144"/>
    </location>
</feature>
<feature type="topological domain" description="Mitochondrial intermembrane" evidence="1">
    <location>
        <begin position="145"/>
        <end position="249"/>
    </location>
</feature>
<organism>
    <name type="scientific">Schizosaccharomyces pombe (strain 972 / ATCC 24843)</name>
    <name type="common">Fission yeast</name>
    <dbReference type="NCBI Taxonomy" id="284812"/>
    <lineage>
        <taxon>Eukaryota</taxon>
        <taxon>Fungi</taxon>
        <taxon>Dikarya</taxon>
        <taxon>Ascomycota</taxon>
        <taxon>Taphrinomycotina</taxon>
        <taxon>Schizosaccharomycetes</taxon>
        <taxon>Schizosaccharomycetales</taxon>
        <taxon>Schizosaccharomycetaceae</taxon>
        <taxon>Schizosaccharomyces</taxon>
    </lineage>
</organism>
<keyword id="KW-0472">Membrane</keyword>
<keyword id="KW-0496">Mitochondrion</keyword>
<keyword id="KW-0999">Mitochondrion inner membrane</keyword>
<keyword id="KW-1185">Reference proteome</keyword>
<keyword id="KW-0812">Transmembrane</keyword>
<keyword id="KW-1133">Transmembrane helix</keyword>
<gene>
    <name type="primary">coa1</name>
    <name type="ORF">SPBC16E9.03c</name>
</gene>
<evidence type="ECO:0000250" key="1"/>
<evidence type="ECO:0000255" key="2"/>
<evidence type="ECO:0000305" key="3"/>